<reference key="1">
    <citation type="journal article" date="2001" name="Proc. Natl. Acad. Sci. U.S.A.">
        <title>Complete genome sequence of Caulobacter crescentus.</title>
        <authorList>
            <person name="Nierman W.C."/>
            <person name="Feldblyum T.V."/>
            <person name="Laub M.T."/>
            <person name="Paulsen I.T."/>
            <person name="Nelson K.E."/>
            <person name="Eisen J.A."/>
            <person name="Heidelberg J.F."/>
            <person name="Alley M.R.K."/>
            <person name="Ohta N."/>
            <person name="Maddock J.R."/>
            <person name="Potocka I."/>
            <person name="Nelson W.C."/>
            <person name="Newton A."/>
            <person name="Stephens C."/>
            <person name="Phadke N.D."/>
            <person name="Ely B."/>
            <person name="DeBoy R.T."/>
            <person name="Dodson R.J."/>
            <person name="Durkin A.S."/>
            <person name="Gwinn M.L."/>
            <person name="Haft D.H."/>
            <person name="Kolonay J.F."/>
            <person name="Smit J."/>
            <person name="Craven M.B."/>
            <person name="Khouri H.M."/>
            <person name="Shetty J."/>
            <person name="Berry K.J."/>
            <person name="Utterback T.R."/>
            <person name="Tran K."/>
            <person name="Wolf A.M."/>
            <person name="Vamathevan J.J."/>
            <person name="Ermolaeva M.D."/>
            <person name="White O."/>
            <person name="Salzberg S.L."/>
            <person name="Venter J.C."/>
            <person name="Shapiro L."/>
            <person name="Fraser C.M."/>
        </authorList>
    </citation>
    <scope>NUCLEOTIDE SEQUENCE [LARGE SCALE GENOMIC DNA]</scope>
    <source>
        <strain>ATCC 19089 / CIP 103742 / CB 15</strain>
    </source>
</reference>
<accession>Q9ABB3</accession>
<gene>
    <name evidence="1" type="primary">rpmA</name>
    <name type="ordered locus">CC_0318</name>
</gene>
<proteinExistence type="inferred from homology"/>
<name>RL27_CAUVC</name>
<keyword id="KW-1185">Reference proteome</keyword>
<keyword id="KW-0687">Ribonucleoprotein</keyword>
<keyword id="KW-0689">Ribosomal protein</keyword>
<organism>
    <name type="scientific">Caulobacter vibrioides (strain ATCC 19089 / CIP 103742 / CB 15)</name>
    <name type="common">Caulobacter crescentus</name>
    <dbReference type="NCBI Taxonomy" id="190650"/>
    <lineage>
        <taxon>Bacteria</taxon>
        <taxon>Pseudomonadati</taxon>
        <taxon>Pseudomonadota</taxon>
        <taxon>Alphaproteobacteria</taxon>
        <taxon>Caulobacterales</taxon>
        <taxon>Caulobacteraceae</taxon>
        <taxon>Caulobacter</taxon>
    </lineage>
</organism>
<comment type="similarity">
    <text evidence="1">Belongs to the bacterial ribosomal protein bL27 family.</text>
</comment>
<sequence>MAHKKSGGSSSNGRDSESKRLGVKKFGGEKVLAGNILVRQRGTKFYPGSGVGIGKDHTLFALVQGAVGFVTKKHNRTYVTVTPAAQPAE</sequence>
<dbReference type="EMBL" id="AE005673">
    <property type="protein sequence ID" value="AAK22305.1"/>
    <property type="molecule type" value="Genomic_DNA"/>
</dbReference>
<dbReference type="PIR" id="E87288">
    <property type="entry name" value="E87288"/>
</dbReference>
<dbReference type="RefSeq" id="NP_419137.1">
    <property type="nucleotide sequence ID" value="NC_002696.2"/>
</dbReference>
<dbReference type="RefSeq" id="WP_010918207.1">
    <property type="nucleotide sequence ID" value="NC_002696.2"/>
</dbReference>
<dbReference type="SMR" id="Q9ABB3"/>
<dbReference type="STRING" id="190650.CC_0318"/>
<dbReference type="EnsemblBacteria" id="AAK22305">
    <property type="protein sequence ID" value="AAK22305"/>
    <property type="gene ID" value="CC_0318"/>
</dbReference>
<dbReference type="KEGG" id="ccr:CC_0318"/>
<dbReference type="PATRIC" id="fig|190650.5.peg.317"/>
<dbReference type="eggNOG" id="COG0211">
    <property type="taxonomic scope" value="Bacteria"/>
</dbReference>
<dbReference type="HOGENOM" id="CLU_095424_4_1_5"/>
<dbReference type="BioCyc" id="CAULO:CC0318-MONOMER"/>
<dbReference type="Proteomes" id="UP000001816">
    <property type="component" value="Chromosome"/>
</dbReference>
<dbReference type="GO" id="GO:0022625">
    <property type="term" value="C:cytosolic large ribosomal subunit"/>
    <property type="evidence" value="ECO:0007669"/>
    <property type="project" value="TreeGrafter"/>
</dbReference>
<dbReference type="GO" id="GO:0003735">
    <property type="term" value="F:structural constituent of ribosome"/>
    <property type="evidence" value="ECO:0007669"/>
    <property type="project" value="InterPro"/>
</dbReference>
<dbReference type="GO" id="GO:0006412">
    <property type="term" value="P:translation"/>
    <property type="evidence" value="ECO:0007669"/>
    <property type="project" value="UniProtKB-UniRule"/>
</dbReference>
<dbReference type="FunFam" id="2.40.50.100:FF:000020">
    <property type="entry name" value="50S ribosomal protein L27"/>
    <property type="match status" value="1"/>
</dbReference>
<dbReference type="Gene3D" id="2.40.50.100">
    <property type="match status" value="1"/>
</dbReference>
<dbReference type="HAMAP" id="MF_00539">
    <property type="entry name" value="Ribosomal_bL27"/>
    <property type="match status" value="1"/>
</dbReference>
<dbReference type="InterPro" id="IPR001684">
    <property type="entry name" value="Ribosomal_bL27"/>
</dbReference>
<dbReference type="InterPro" id="IPR018261">
    <property type="entry name" value="Ribosomal_bL27_CS"/>
</dbReference>
<dbReference type="NCBIfam" id="TIGR00062">
    <property type="entry name" value="L27"/>
    <property type="match status" value="1"/>
</dbReference>
<dbReference type="PANTHER" id="PTHR15893:SF0">
    <property type="entry name" value="LARGE RIBOSOMAL SUBUNIT PROTEIN BL27M"/>
    <property type="match status" value="1"/>
</dbReference>
<dbReference type="PANTHER" id="PTHR15893">
    <property type="entry name" value="RIBOSOMAL PROTEIN L27"/>
    <property type="match status" value="1"/>
</dbReference>
<dbReference type="Pfam" id="PF01016">
    <property type="entry name" value="Ribosomal_L27"/>
    <property type="match status" value="1"/>
</dbReference>
<dbReference type="PRINTS" id="PR00063">
    <property type="entry name" value="RIBOSOMALL27"/>
</dbReference>
<dbReference type="SUPFAM" id="SSF110324">
    <property type="entry name" value="Ribosomal L27 protein-like"/>
    <property type="match status" value="1"/>
</dbReference>
<dbReference type="PROSITE" id="PS00831">
    <property type="entry name" value="RIBOSOMAL_L27"/>
    <property type="match status" value="1"/>
</dbReference>
<evidence type="ECO:0000255" key="1">
    <source>
        <dbReference type="HAMAP-Rule" id="MF_00539"/>
    </source>
</evidence>
<evidence type="ECO:0000256" key="2">
    <source>
        <dbReference type="SAM" id="MobiDB-lite"/>
    </source>
</evidence>
<evidence type="ECO:0000305" key="3"/>
<protein>
    <recommendedName>
        <fullName evidence="1">Large ribosomal subunit protein bL27</fullName>
    </recommendedName>
    <alternativeName>
        <fullName evidence="3">50S ribosomal protein L27</fullName>
    </alternativeName>
</protein>
<feature type="chain" id="PRO_0000181067" description="Large ribosomal subunit protein bL27">
    <location>
        <begin position="1"/>
        <end position="89"/>
    </location>
</feature>
<feature type="region of interest" description="Disordered" evidence="2">
    <location>
        <begin position="1"/>
        <end position="21"/>
    </location>
</feature>